<comment type="catalytic activity">
    <reaction>
        <text>4 Fe(II)-[cytochrome c] + O2 + 8 H(+)(in) = 4 Fe(III)-[cytochrome c] + 2 H2O + 4 H(+)(out)</text>
        <dbReference type="Rhea" id="RHEA:11436"/>
        <dbReference type="Rhea" id="RHEA-COMP:10350"/>
        <dbReference type="Rhea" id="RHEA-COMP:14399"/>
        <dbReference type="ChEBI" id="CHEBI:15377"/>
        <dbReference type="ChEBI" id="CHEBI:15378"/>
        <dbReference type="ChEBI" id="CHEBI:15379"/>
        <dbReference type="ChEBI" id="CHEBI:29033"/>
        <dbReference type="ChEBI" id="CHEBI:29034"/>
        <dbReference type="EC" id="7.1.1.9"/>
    </reaction>
</comment>
<comment type="subcellular location">
    <subcellularLocation>
        <location evidence="1">Cell membrane</location>
        <topology evidence="1">Multi-pass membrane protein</topology>
    </subcellularLocation>
</comment>
<comment type="similarity">
    <text evidence="3">Belongs to the cytochrome c oxidase subunit 3 family.</text>
</comment>
<organism>
    <name type="scientific">Rickettsia felis (strain ATCC VR-1525 / URRWXCal2)</name>
    <name type="common">Rickettsia azadi</name>
    <dbReference type="NCBI Taxonomy" id="315456"/>
    <lineage>
        <taxon>Bacteria</taxon>
        <taxon>Pseudomonadati</taxon>
        <taxon>Pseudomonadota</taxon>
        <taxon>Alphaproteobacteria</taxon>
        <taxon>Rickettsiales</taxon>
        <taxon>Rickettsiaceae</taxon>
        <taxon>Rickettsieae</taxon>
        <taxon>Rickettsia</taxon>
        <taxon>spotted fever group</taxon>
    </lineage>
</organism>
<accession>Q4UKK0</accession>
<keyword id="KW-1003">Cell membrane</keyword>
<keyword id="KW-0472">Membrane</keyword>
<keyword id="KW-1278">Translocase</keyword>
<keyword id="KW-0812">Transmembrane</keyword>
<keyword id="KW-1133">Transmembrane helix</keyword>
<gene>
    <name type="primary">ctaE</name>
    <name type="synonym">coxC</name>
    <name type="ordered locus">RF_1076</name>
</gene>
<proteinExistence type="inferred from homology"/>
<evidence type="ECO:0000250" key="1"/>
<evidence type="ECO:0000255" key="2"/>
<evidence type="ECO:0000305" key="3"/>
<feature type="chain" id="PRO_0000280890" description="Probable cytochrome c oxidase subunit 3">
    <location>
        <begin position="1"/>
        <end position="278"/>
    </location>
</feature>
<feature type="transmembrane region" description="Helical" evidence="2">
    <location>
        <begin position="21"/>
        <end position="41"/>
    </location>
</feature>
<feature type="transmembrane region" description="Helical" evidence="2">
    <location>
        <begin position="46"/>
        <end position="66"/>
    </location>
</feature>
<feature type="transmembrane region" description="Helical" evidence="2">
    <location>
        <begin position="89"/>
        <end position="109"/>
    </location>
</feature>
<feature type="transmembrane region" description="Helical" evidence="2">
    <location>
        <begin position="174"/>
        <end position="194"/>
    </location>
</feature>
<feature type="transmembrane region" description="Helical" evidence="2">
    <location>
        <begin position="212"/>
        <end position="232"/>
    </location>
</feature>
<feature type="transmembrane region" description="Helical" evidence="2">
    <location>
        <begin position="256"/>
        <end position="276"/>
    </location>
</feature>
<dbReference type="EC" id="7.1.1.9"/>
<dbReference type="EMBL" id="CP000053">
    <property type="protein sequence ID" value="AAY61927.1"/>
    <property type="molecule type" value="Genomic_DNA"/>
</dbReference>
<dbReference type="SMR" id="Q4UKK0"/>
<dbReference type="STRING" id="315456.RF_1076"/>
<dbReference type="KEGG" id="rfe:RF_1076"/>
<dbReference type="eggNOG" id="COG1845">
    <property type="taxonomic scope" value="Bacteria"/>
</dbReference>
<dbReference type="HOGENOM" id="CLU_044071_0_0_5"/>
<dbReference type="OrthoDB" id="9810850at2"/>
<dbReference type="Proteomes" id="UP000008548">
    <property type="component" value="Chromosome"/>
</dbReference>
<dbReference type="GO" id="GO:0005886">
    <property type="term" value="C:plasma membrane"/>
    <property type="evidence" value="ECO:0007669"/>
    <property type="project" value="UniProtKB-SubCell"/>
</dbReference>
<dbReference type="GO" id="GO:0004129">
    <property type="term" value="F:cytochrome-c oxidase activity"/>
    <property type="evidence" value="ECO:0007669"/>
    <property type="project" value="UniProtKB-EC"/>
</dbReference>
<dbReference type="GO" id="GO:0019646">
    <property type="term" value="P:aerobic electron transport chain"/>
    <property type="evidence" value="ECO:0007669"/>
    <property type="project" value="InterPro"/>
</dbReference>
<dbReference type="CDD" id="cd01665">
    <property type="entry name" value="Cyt_c_Oxidase_III"/>
    <property type="match status" value="1"/>
</dbReference>
<dbReference type="FunFam" id="1.10.287.70:FF:000082">
    <property type="entry name" value="Cytochrome c oxidase subunit 3"/>
    <property type="match status" value="1"/>
</dbReference>
<dbReference type="FunFam" id="1.20.120.80:FF:000003">
    <property type="entry name" value="Cytochrome c oxidase subunit 3"/>
    <property type="match status" value="1"/>
</dbReference>
<dbReference type="Gene3D" id="1.10.287.70">
    <property type="match status" value="1"/>
</dbReference>
<dbReference type="Gene3D" id="1.20.120.80">
    <property type="entry name" value="Cytochrome c oxidase, subunit III, four-helix bundle"/>
    <property type="match status" value="1"/>
</dbReference>
<dbReference type="InterPro" id="IPR024791">
    <property type="entry name" value="Cyt_c/ubiquinol_Oxase_su3"/>
</dbReference>
<dbReference type="InterPro" id="IPR033945">
    <property type="entry name" value="Cyt_c_oxase_su3_dom"/>
</dbReference>
<dbReference type="InterPro" id="IPR000298">
    <property type="entry name" value="Cyt_c_oxidase-like_su3"/>
</dbReference>
<dbReference type="InterPro" id="IPR035973">
    <property type="entry name" value="Cyt_c_oxidase_su3-like_sf"/>
</dbReference>
<dbReference type="InterPro" id="IPR013833">
    <property type="entry name" value="Cyt_c_oxidase_su3_a-hlx"/>
</dbReference>
<dbReference type="PANTHER" id="PTHR11403:SF7">
    <property type="entry name" value="CYTOCHROME C OXIDASE SUBUNIT 3"/>
    <property type="match status" value="1"/>
</dbReference>
<dbReference type="PANTHER" id="PTHR11403">
    <property type="entry name" value="CYTOCHROME C OXIDASE SUBUNIT III"/>
    <property type="match status" value="1"/>
</dbReference>
<dbReference type="Pfam" id="PF00510">
    <property type="entry name" value="COX3"/>
    <property type="match status" value="1"/>
</dbReference>
<dbReference type="SUPFAM" id="SSF81452">
    <property type="entry name" value="Cytochrome c oxidase subunit III-like"/>
    <property type="match status" value="1"/>
</dbReference>
<dbReference type="PROSITE" id="PS50253">
    <property type="entry name" value="COX3"/>
    <property type="match status" value="1"/>
</dbReference>
<name>COX3_RICFE</name>
<sequence length="278" mass="31505">MNPNSHPITKSHLFHIVDPSPWPVLTSFALLLLVIGGVSFMHGYKFNIYILSAGVISVGYCLYSWWRDVVKEGIVEHQHTSPVRKGLQIGMALFILTEIVFFGVFFASFFKSSLSPVGLLDGVWVVKQGIWPPPTIKTFDPFDIPFINTLILLLSGTTVTWAHYALEEKNQKDCVTALALTILLGIFFTTMQAYEYYHAAFKFTDGIYASNFYLATGFHGAHVIIGTIFLIVCYFRAKRGDFTTEGNGHLGFEFAAWYWHFVDVVWLFLFTFVYIFGS</sequence>
<reference key="1">
    <citation type="journal article" date="2005" name="PLoS Biol.">
        <title>The genome sequence of Rickettsia felis identifies the first putative conjugative plasmid in an obligate intracellular parasite.</title>
        <authorList>
            <person name="Ogata H."/>
            <person name="Renesto P."/>
            <person name="Audic S."/>
            <person name="Robert C."/>
            <person name="Blanc G."/>
            <person name="Fournier P.-E."/>
            <person name="Parinello H."/>
            <person name="Claverie J.-M."/>
            <person name="Raoult D."/>
        </authorList>
    </citation>
    <scope>NUCLEOTIDE SEQUENCE [LARGE SCALE GENOMIC DNA]</scope>
    <source>
        <strain>ATCC VR-1525 / URRWXCal2</strain>
    </source>
</reference>
<protein>
    <recommendedName>
        <fullName>Probable cytochrome c oxidase subunit 3</fullName>
        <ecNumber>7.1.1.9</ecNumber>
    </recommendedName>
    <alternativeName>
        <fullName>Cytochrome aa3 subunit 3</fullName>
    </alternativeName>
    <alternativeName>
        <fullName>Cytochrome c oxidase polypeptide III</fullName>
    </alternativeName>
</protein>